<reference key="1">
    <citation type="submission" date="2005-08" db="EMBL/GenBank/DDBJ databases">
        <title>Complete sequence of chromosome 1 of Nitrosospira multiformis ATCC 25196.</title>
        <authorList>
            <person name="Copeland A."/>
            <person name="Lucas S."/>
            <person name="Lapidus A."/>
            <person name="Barry K."/>
            <person name="Detter J.C."/>
            <person name="Glavina T."/>
            <person name="Hammon N."/>
            <person name="Israni S."/>
            <person name="Pitluck S."/>
            <person name="Chain P."/>
            <person name="Malfatti S."/>
            <person name="Shin M."/>
            <person name="Vergez L."/>
            <person name="Schmutz J."/>
            <person name="Larimer F."/>
            <person name="Land M."/>
            <person name="Hauser L."/>
            <person name="Kyrpides N."/>
            <person name="Lykidis A."/>
            <person name="Richardson P."/>
        </authorList>
    </citation>
    <scope>NUCLEOTIDE SEQUENCE [LARGE SCALE GENOMIC DNA]</scope>
    <source>
        <strain>ATCC 25196 / NCIMB 11849 / C 71</strain>
    </source>
</reference>
<accession>Q2YA85</accession>
<organism>
    <name type="scientific">Nitrosospira multiformis (strain ATCC 25196 / NCIMB 11849 / C 71)</name>
    <dbReference type="NCBI Taxonomy" id="323848"/>
    <lineage>
        <taxon>Bacteria</taxon>
        <taxon>Pseudomonadati</taxon>
        <taxon>Pseudomonadota</taxon>
        <taxon>Betaproteobacteria</taxon>
        <taxon>Nitrosomonadales</taxon>
        <taxon>Nitrosomonadaceae</taxon>
        <taxon>Nitrosospira</taxon>
    </lineage>
</organism>
<protein>
    <recommendedName>
        <fullName evidence="1">Disulfide bond formation protein B</fullName>
    </recommendedName>
    <alternativeName>
        <fullName evidence="1">Disulfide oxidoreductase</fullName>
    </alternativeName>
</protein>
<gene>
    <name evidence="1" type="primary">dsbB</name>
    <name type="ordered locus">Nmul_A1033</name>
</gene>
<feature type="chain" id="PRO_0000298376" description="Disulfide bond formation protein B">
    <location>
        <begin position="1"/>
        <end position="168"/>
    </location>
</feature>
<feature type="topological domain" description="Cytoplasmic" evidence="1">
    <location>
        <begin position="1"/>
        <end position="11"/>
    </location>
</feature>
<feature type="transmembrane region" description="Helical" evidence="1">
    <location>
        <begin position="12"/>
        <end position="28"/>
    </location>
</feature>
<feature type="topological domain" description="Periplasmic" evidence="1">
    <location>
        <begin position="29"/>
        <end position="46"/>
    </location>
</feature>
<feature type="transmembrane region" description="Helical" evidence="1">
    <location>
        <begin position="47"/>
        <end position="63"/>
    </location>
</feature>
<feature type="topological domain" description="Cytoplasmic" evidence="1">
    <location>
        <begin position="64"/>
        <end position="69"/>
    </location>
</feature>
<feature type="transmembrane region" description="Helical" evidence="1">
    <location>
        <begin position="70"/>
        <end position="87"/>
    </location>
</feature>
<feature type="topological domain" description="Periplasmic" evidence="1">
    <location>
        <begin position="88"/>
        <end position="143"/>
    </location>
</feature>
<feature type="transmembrane region" description="Helical" evidence="1">
    <location>
        <begin position="144"/>
        <end position="162"/>
    </location>
</feature>
<feature type="topological domain" description="Cytoplasmic" evidence="1">
    <location>
        <begin position="163"/>
        <end position="168"/>
    </location>
</feature>
<feature type="disulfide bond" description="Redox-active" evidence="1">
    <location>
        <begin position="38"/>
        <end position="41"/>
    </location>
</feature>
<feature type="disulfide bond" description="Redox-active" evidence="1">
    <location>
        <begin position="101"/>
        <end position="129"/>
    </location>
</feature>
<sequence length="168" mass="18814">MSNPMRPVRSILLAIFTGCAGLIGYALYLQLVENLLPCPLCVVQRMAYWLIGLTALAGFFHTPETTGRRIYAGLMAVFAFTGGLVALRQAWLVRYPEAFECGISPEEAFLNALPLARWWPVMFEANGDCADVTWKFASLTLPDWSAIFFMILAALSIYVLLVRENQRE</sequence>
<keyword id="KW-0997">Cell inner membrane</keyword>
<keyword id="KW-1003">Cell membrane</keyword>
<keyword id="KW-0143">Chaperone</keyword>
<keyword id="KW-1015">Disulfide bond</keyword>
<keyword id="KW-0249">Electron transport</keyword>
<keyword id="KW-0472">Membrane</keyword>
<keyword id="KW-0560">Oxidoreductase</keyword>
<keyword id="KW-0676">Redox-active center</keyword>
<keyword id="KW-1185">Reference proteome</keyword>
<keyword id="KW-0812">Transmembrane</keyword>
<keyword id="KW-1133">Transmembrane helix</keyword>
<keyword id="KW-0813">Transport</keyword>
<evidence type="ECO:0000255" key="1">
    <source>
        <dbReference type="HAMAP-Rule" id="MF_00286"/>
    </source>
</evidence>
<proteinExistence type="inferred from homology"/>
<name>DSBB_NITMU</name>
<dbReference type="EMBL" id="CP000103">
    <property type="protein sequence ID" value="ABB74336.1"/>
    <property type="molecule type" value="Genomic_DNA"/>
</dbReference>
<dbReference type="RefSeq" id="WP_011380381.1">
    <property type="nucleotide sequence ID" value="NC_007614.1"/>
</dbReference>
<dbReference type="STRING" id="323848.Nmul_A1033"/>
<dbReference type="KEGG" id="nmu:Nmul_A1033"/>
<dbReference type="eggNOG" id="COG1495">
    <property type="taxonomic scope" value="Bacteria"/>
</dbReference>
<dbReference type="HOGENOM" id="CLU_098660_1_0_4"/>
<dbReference type="OrthoDB" id="3711263at2"/>
<dbReference type="Proteomes" id="UP000002718">
    <property type="component" value="Chromosome"/>
</dbReference>
<dbReference type="GO" id="GO:0005886">
    <property type="term" value="C:plasma membrane"/>
    <property type="evidence" value="ECO:0007669"/>
    <property type="project" value="UniProtKB-SubCell"/>
</dbReference>
<dbReference type="GO" id="GO:0009055">
    <property type="term" value="F:electron transfer activity"/>
    <property type="evidence" value="ECO:0007669"/>
    <property type="project" value="UniProtKB-UniRule"/>
</dbReference>
<dbReference type="GO" id="GO:0015035">
    <property type="term" value="F:protein-disulfide reductase activity"/>
    <property type="evidence" value="ECO:0007669"/>
    <property type="project" value="UniProtKB-UniRule"/>
</dbReference>
<dbReference type="GO" id="GO:0006457">
    <property type="term" value="P:protein folding"/>
    <property type="evidence" value="ECO:0007669"/>
    <property type="project" value="InterPro"/>
</dbReference>
<dbReference type="Gene3D" id="1.20.1550.10">
    <property type="entry name" value="DsbB-like"/>
    <property type="match status" value="1"/>
</dbReference>
<dbReference type="HAMAP" id="MF_00286">
    <property type="entry name" value="DsbB"/>
    <property type="match status" value="1"/>
</dbReference>
<dbReference type="InterPro" id="IPR003752">
    <property type="entry name" value="DiS_bond_form_DsbB/BdbC"/>
</dbReference>
<dbReference type="InterPro" id="IPR022920">
    <property type="entry name" value="Disulphide_bond_form_DsbB"/>
</dbReference>
<dbReference type="InterPro" id="IPR050183">
    <property type="entry name" value="DsbB"/>
</dbReference>
<dbReference type="InterPro" id="IPR023380">
    <property type="entry name" value="DsbB-like_sf"/>
</dbReference>
<dbReference type="PANTHER" id="PTHR36570">
    <property type="entry name" value="DISULFIDE BOND FORMATION PROTEIN B"/>
    <property type="match status" value="1"/>
</dbReference>
<dbReference type="PANTHER" id="PTHR36570:SF3">
    <property type="entry name" value="DISULFIDE BOND FORMATION PROTEIN B"/>
    <property type="match status" value="1"/>
</dbReference>
<dbReference type="Pfam" id="PF02600">
    <property type="entry name" value="DsbB"/>
    <property type="match status" value="1"/>
</dbReference>
<dbReference type="SUPFAM" id="SSF158442">
    <property type="entry name" value="DsbB-like"/>
    <property type="match status" value="1"/>
</dbReference>
<comment type="function">
    <text evidence="1">Required for disulfide bond formation in some periplasmic proteins. Acts by oxidizing the DsbA protein.</text>
</comment>
<comment type="subcellular location">
    <subcellularLocation>
        <location evidence="1">Cell inner membrane</location>
        <topology evidence="1">Multi-pass membrane protein</topology>
    </subcellularLocation>
</comment>
<comment type="similarity">
    <text evidence="1">Belongs to the DsbB family.</text>
</comment>